<proteinExistence type="inferred from homology"/>
<reference key="1">
    <citation type="journal article" date="2002" name="Nucleic Acids Res.">
        <title>Genome sequence of Shigella flexneri 2a: insights into pathogenicity through comparison with genomes of Escherichia coli K12 and O157.</title>
        <authorList>
            <person name="Jin Q."/>
            <person name="Yuan Z."/>
            <person name="Xu J."/>
            <person name="Wang Y."/>
            <person name="Shen Y."/>
            <person name="Lu W."/>
            <person name="Wang J."/>
            <person name="Liu H."/>
            <person name="Yang J."/>
            <person name="Yang F."/>
            <person name="Zhang X."/>
            <person name="Zhang J."/>
            <person name="Yang G."/>
            <person name="Wu H."/>
            <person name="Qu D."/>
            <person name="Dong J."/>
            <person name="Sun L."/>
            <person name="Xue Y."/>
            <person name="Zhao A."/>
            <person name="Gao Y."/>
            <person name="Zhu J."/>
            <person name="Kan B."/>
            <person name="Ding K."/>
            <person name="Chen S."/>
            <person name="Cheng H."/>
            <person name="Yao Z."/>
            <person name="He B."/>
            <person name="Chen R."/>
            <person name="Ma D."/>
            <person name="Qiang B."/>
            <person name="Wen Y."/>
            <person name="Hou Y."/>
            <person name="Yu J."/>
        </authorList>
    </citation>
    <scope>NUCLEOTIDE SEQUENCE [LARGE SCALE GENOMIC DNA]</scope>
    <source>
        <strain>301 / Serotype 2a</strain>
    </source>
</reference>
<reference key="2">
    <citation type="journal article" date="2003" name="Infect. Immun.">
        <title>Complete genome sequence and comparative genomics of Shigella flexneri serotype 2a strain 2457T.</title>
        <authorList>
            <person name="Wei J."/>
            <person name="Goldberg M.B."/>
            <person name="Burland V."/>
            <person name="Venkatesan M.M."/>
            <person name="Deng W."/>
            <person name="Fournier G."/>
            <person name="Mayhew G.F."/>
            <person name="Plunkett G. III"/>
            <person name="Rose D.J."/>
            <person name="Darling A."/>
            <person name="Mau B."/>
            <person name="Perna N.T."/>
            <person name="Payne S.M."/>
            <person name="Runyen-Janecky L.J."/>
            <person name="Zhou S."/>
            <person name="Schwartz D.C."/>
            <person name="Blattner F.R."/>
        </authorList>
    </citation>
    <scope>NUCLEOTIDE SEQUENCE [LARGE SCALE GENOMIC DNA]</scope>
    <source>
        <strain>ATCC 700930 / 2457T / Serotype 2a</strain>
    </source>
</reference>
<accession>Q83IY4</accession>
<accession>Q7BZ99</accession>
<feature type="initiator methionine" description="Removed" evidence="1">
    <location>
        <position position="1"/>
    </location>
</feature>
<feature type="chain" id="PRO_0000135377" description="Glutamine--fructose-6-phosphate aminotransferase [isomerizing]">
    <location>
        <begin position="2"/>
        <end position="609"/>
    </location>
</feature>
<feature type="domain" description="Glutamine amidotransferase type-2" evidence="1">
    <location>
        <begin position="2"/>
        <end position="218"/>
    </location>
</feature>
<feature type="domain" description="SIS 1" evidence="1">
    <location>
        <begin position="286"/>
        <end position="426"/>
    </location>
</feature>
<feature type="domain" description="SIS 2" evidence="1">
    <location>
        <begin position="458"/>
        <end position="599"/>
    </location>
</feature>
<feature type="active site" description="Nucleophile; for GATase activity" evidence="1">
    <location>
        <position position="2"/>
    </location>
</feature>
<feature type="active site" description="For Fru-6P isomerization activity" evidence="1">
    <location>
        <position position="604"/>
    </location>
</feature>
<gene>
    <name evidence="1" type="primary">glmS</name>
    <name type="ordered locus">SF3809</name>
    <name type="ordered locus">S3959</name>
</gene>
<dbReference type="EC" id="2.6.1.16" evidence="1"/>
<dbReference type="EMBL" id="AE005674">
    <property type="protein sequence ID" value="AAN45249.1"/>
    <property type="molecule type" value="Genomic_DNA"/>
</dbReference>
<dbReference type="EMBL" id="AE014073">
    <property type="protein sequence ID" value="AAP18948.1"/>
    <property type="molecule type" value="Genomic_DNA"/>
</dbReference>
<dbReference type="RefSeq" id="NP_709542.1">
    <property type="nucleotide sequence ID" value="NC_004337.2"/>
</dbReference>
<dbReference type="RefSeq" id="WP_000334086.1">
    <property type="nucleotide sequence ID" value="NZ_WPGW01000050.1"/>
</dbReference>
<dbReference type="SMR" id="Q83IY4"/>
<dbReference type="STRING" id="198214.SF3809"/>
<dbReference type="PaxDb" id="198214-SF3809"/>
<dbReference type="GeneID" id="1026074"/>
<dbReference type="KEGG" id="sfl:SF3809"/>
<dbReference type="KEGG" id="sfx:S3959"/>
<dbReference type="PATRIC" id="fig|198214.7.peg.4496"/>
<dbReference type="HOGENOM" id="CLU_012520_5_2_6"/>
<dbReference type="Proteomes" id="UP000001006">
    <property type="component" value="Chromosome"/>
</dbReference>
<dbReference type="Proteomes" id="UP000002673">
    <property type="component" value="Chromosome"/>
</dbReference>
<dbReference type="GO" id="GO:0005829">
    <property type="term" value="C:cytosol"/>
    <property type="evidence" value="ECO:0007669"/>
    <property type="project" value="TreeGrafter"/>
</dbReference>
<dbReference type="GO" id="GO:0097367">
    <property type="term" value="F:carbohydrate derivative binding"/>
    <property type="evidence" value="ECO:0007669"/>
    <property type="project" value="InterPro"/>
</dbReference>
<dbReference type="GO" id="GO:0004360">
    <property type="term" value="F:glutamine-fructose-6-phosphate transaminase (isomerizing) activity"/>
    <property type="evidence" value="ECO:0007669"/>
    <property type="project" value="UniProtKB-UniRule"/>
</dbReference>
<dbReference type="GO" id="GO:0005975">
    <property type="term" value="P:carbohydrate metabolic process"/>
    <property type="evidence" value="ECO:0007669"/>
    <property type="project" value="UniProtKB-UniRule"/>
</dbReference>
<dbReference type="GO" id="GO:0006002">
    <property type="term" value="P:fructose 6-phosphate metabolic process"/>
    <property type="evidence" value="ECO:0007669"/>
    <property type="project" value="TreeGrafter"/>
</dbReference>
<dbReference type="GO" id="GO:0006487">
    <property type="term" value="P:protein N-linked glycosylation"/>
    <property type="evidence" value="ECO:0007669"/>
    <property type="project" value="TreeGrafter"/>
</dbReference>
<dbReference type="GO" id="GO:0006047">
    <property type="term" value="P:UDP-N-acetylglucosamine metabolic process"/>
    <property type="evidence" value="ECO:0007669"/>
    <property type="project" value="TreeGrafter"/>
</dbReference>
<dbReference type="CDD" id="cd00714">
    <property type="entry name" value="GFAT"/>
    <property type="match status" value="1"/>
</dbReference>
<dbReference type="CDD" id="cd05008">
    <property type="entry name" value="SIS_GlmS_GlmD_1"/>
    <property type="match status" value="1"/>
</dbReference>
<dbReference type="CDD" id="cd05009">
    <property type="entry name" value="SIS_GlmS_GlmD_2"/>
    <property type="match status" value="1"/>
</dbReference>
<dbReference type="FunFam" id="3.40.50.10490:FF:000001">
    <property type="entry name" value="Glutamine--fructose-6-phosphate aminotransferase [isomerizing]"/>
    <property type="match status" value="1"/>
</dbReference>
<dbReference type="FunFam" id="3.40.50.10490:FF:000002">
    <property type="entry name" value="Glutamine--fructose-6-phosphate aminotransferase [isomerizing]"/>
    <property type="match status" value="1"/>
</dbReference>
<dbReference type="FunFam" id="3.60.20.10:FF:000006">
    <property type="entry name" value="Glutamine--fructose-6-phosphate aminotransferase [isomerizing]"/>
    <property type="match status" value="1"/>
</dbReference>
<dbReference type="Gene3D" id="3.40.50.10490">
    <property type="entry name" value="Glucose-6-phosphate isomerase like protein, domain 1"/>
    <property type="match status" value="2"/>
</dbReference>
<dbReference type="Gene3D" id="3.60.20.10">
    <property type="entry name" value="Glutamine Phosphoribosylpyrophosphate, subunit 1, domain 1"/>
    <property type="match status" value="1"/>
</dbReference>
<dbReference type="HAMAP" id="MF_00164">
    <property type="entry name" value="GlmS"/>
    <property type="match status" value="1"/>
</dbReference>
<dbReference type="InterPro" id="IPR017932">
    <property type="entry name" value="GATase_2_dom"/>
</dbReference>
<dbReference type="InterPro" id="IPR005855">
    <property type="entry name" value="GFAT"/>
</dbReference>
<dbReference type="InterPro" id="IPR047084">
    <property type="entry name" value="GFAT_N"/>
</dbReference>
<dbReference type="InterPro" id="IPR035466">
    <property type="entry name" value="GlmS/AgaS_SIS"/>
</dbReference>
<dbReference type="InterPro" id="IPR035490">
    <property type="entry name" value="GlmS/FrlB_SIS"/>
</dbReference>
<dbReference type="InterPro" id="IPR029055">
    <property type="entry name" value="Ntn_hydrolases_N"/>
</dbReference>
<dbReference type="InterPro" id="IPR001347">
    <property type="entry name" value="SIS_dom"/>
</dbReference>
<dbReference type="InterPro" id="IPR046348">
    <property type="entry name" value="SIS_dom_sf"/>
</dbReference>
<dbReference type="NCBIfam" id="TIGR01135">
    <property type="entry name" value="glmS"/>
    <property type="match status" value="1"/>
</dbReference>
<dbReference type="NCBIfam" id="NF001484">
    <property type="entry name" value="PRK00331.1"/>
    <property type="match status" value="1"/>
</dbReference>
<dbReference type="PANTHER" id="PTHR10937">
    <property type="entry name" value="GLUCOSAMINE--FRUCTOSE-6-PHOSPHATE AMINOTRANSFERASE, ISOMERIZING"/>
    <property type="match status" value="1"/>
</dbReference>
<dbReference type="PANTHER" id="PTHR10937:SF0">
    <property type="entry name" value="GLUTAMINE--FRUCTOSE-6-PHOSPHATE TRANSAMINASE (ISOMERIZING)"/>
    <property type="match status" value="1"/>
</dbReference>
<dbReference type="Pfam" id="PF13522">
    <property type="entry name" value="GATase_6"/>
    <property type="match status" value="1"/>
</dbReference>
<dbReference type="Pfam" id="PF01380">
    <property type="entry name" value="SIS"/>
    <property type="match status" value="2"/>
</dbReference>
<dbReference type="SUPFAM" id="SSF56235">
    <property type="entry name" value="N-terminal nucleophile aminohydrolases (Ntn hydrolases)"/>
    <property type="match status" value="1"/>
</dbReference>
<dbReference type="SUPFAM" id="SSF53697">
    <property type="entry name" value="SIS domain"/>
    <property type="match status" value="1"/>
</dbReference>
<dbReference type="PROSITE" id="PS51278">
    <property type="entry name" value="GATASE_TYPE_2"/>
    <property type="match status" value="1"/>
</dbReference>
<dbReference type="PROSITE" id="PS51464">
    <property type="entry name" value="SIS"/>
    <property type="match status" value="2"/>
</dbReference>
<keyword id="KW-0032">Aminotransferase</keyword>
<keyword id="KW-0963">Cytoplasm</keyword>
<keyword id="KW-0315">Glutamine amidotransferase</keyword>
<keyword id="KW-1185">Reference proteome</keyword>
<keyword id="KW-0677">Repeat</keyword>
<keyword id="KW-0808">Transferase</keyword>
<organism>
    <name type="scientific">Shigella flexneri</name>
    <dbReference type="NCBI Taxonomy" id="623"/>
    <lineage>
        <taxon>Bacteria</taxon>
        <taxon>Pseudomonadati</taxon>
        <taxon>Pseudomonadota</taxon>
        <taxon>Gammaproteobacteria</taxon>
        <taxon>Enterobacterales</taxon>
        <taxon>Enterobacteriaceae</taxon>
        <taxon>Shigella</taxon>
    </lineage>
</organism>
<protein>
    <recommendedName>
        <fullName evidence="1">Glutamine--fructose-6-phosphate aminotransferase [isomerizing]</fullName>
        <ecNumber evidence="1">2.6.1.16</ecNumber>
    </recommendedName>
    <alternativeName>
        <fullName evidence="1">D-fructose-6-phosphate amidotransferase</fullName>
    </alternativeName>
    <alternativeName>
        <fullName evidence="1">GFAT</fullName>
    </alternativeName>
    <alternativeName>
        <fullName evidence="1">Glucosamine-6-phosphate synthase</fullName>
    </alternativeName>
    <alternativeName>
        <fullName evidence="1">Hexosephosphate aminotransferase</fullName>
    </alternativeName>
    <alternativeName>
        <fullName evidence="1">L-glutamine--D-fructose-6-phosphate amidotransferase</fullName>
    </alternativeName>
</protein>
<evidence type="ECO:0000255" key="1">
    <source>
        <dbReference type="HAMAP-Rule" id="MF_00164"/>
    </source>
</evidence>
<name>GLMS_SHIFL</name>
<comment type="function">
    <text evidence="1">Catalyzes the first step in hexosamine metabolism, converting fructose-6P into glucosamine-6P using glutamine as a nitrogen source.</text>
</comment>
<comment type="catalytic activity">
    <reaction evidence="1">
        <text>D-fructose 6-phosphate + L-glutamine = D-glucosamine 6-phosphate + L-glutamate</text>
        <dbReference type="Rhea" id="RHEA:13237"/>
        <dbReference type="ChEBI" id="CHEBI:29985"/>
        <dbReference type="ChEBI" id="CHEBI:58359"/>
        <dbReference type="ChEBI" id="CHEBI:58725"/>
        <dbReference type="ChEBI" id="CHEBI:61527"/>
        <dbReference type="EC" id="2.6.1.16"/>
    </reaction>
</comment>
<comment type="subunit">
    <text evidence="1">Homodimer.</text>
</comment>
<comment type="subcellular location">
    <subcellularLocation>
        <location evidence="1">Cytoplasm</location>
    </subcellularLocation>
</comment>
<sequence>MCGIVGAIAQRDVAEILLEGLRRLEYRGYDSAGLAVVDAEGHMTRLRRLGKVQMLAQAAEEHPLHGGTGIAHTRWATHGEPSEANAHPHVSEHIVVVHNGIIENHEPLREELKARGYTFVSETDTEVIAHLVNWELKQGGTLREAVLRAIPQLRGAYGTVIMDSRHPDTLLAARSGSPLVIGLGMGENFIASDQLALLPVTRRFIFLEEGDIAEITRRSVNIFDKTGAEVKRQDIESNLQYDAGDKGIYRHYMQKEIYEQPNAIKNTLTGRISHGQVDLSELGPNADELLSKVEHIQILACGTSYNSGMVSRYWFESLAGIPCDVEIASEFRYRKSAVRRNSLMITLSQSGETADTLAGLRLSKELGYLGSLAICNVPGSSLVRESDLALMTNAGTEIGVASTKAFTTQLTVLLMLVAKLSRLKGLDASIEHDIVHGLQALPSRIEQMLSQDKRIEALAEDFSDKHHALFLGRGDQYPIALEGALKLKEISYIHAEAYAAGELKHGPLALIDADMPVIVVAPNNELLEKLKSNIEEVRARGGQLYVFADQDAGFVSSDNMHIIEMPHVEEVIAPIFYTVPLQLLAYHVALIKGTDVDQPRNLAKSVTVE</sequence>